<dbReference type="EMBL" id="CP000746">
    <property type="protein sequence ID" value="ABR74133.1"/>
    <property type="molecule type" value="Genomic_DNA"/>
</dbReference>
<dbReference type="RefSeq" id="WP_012072511.1">
    <property type="nucleotide sequence ID" value="NC_009655.1"/>
</dbReference>
<dbReference type="SMR" id="A6VMD6"/>
<dbReference type="STRING" id="339671.Asuc_0761"/>
<dbReference type="KEGG" id="asu:Asuc_0761"/>
<dbReference type="eggNOG" id="COG0360">
    <property type="taxonomic scope" value="Bacteria"/>
</dbReference>
<dbReference type="HOGENOM" id="CLU_113441_6_1_6"/>
<dbReference type="OrthoDB" id="9812702at2"/>
<dbReference type="Proteomes" id="UP000001114">
    <property type="component" value="Chromosome"/>
</dbReference>
<dbReference type="GO" id="GO:0022627">
    <property type="term" value="C:cytosolic small ribosomal subunit"/>
    <property type="evidence" value="ECO:0007669"/>
    <property type="project" value="TreeGrafter"/>
</dbReference>
<dbReference type="GO" id="GO:0070181">
    <property type="term" value="F:small ribosomal subunit rRNA binding"/>
    <property type="evidence" value="ECO:0007669"/>
    <property type="project" value="TreeGrafter"/>
</dbReference>
<dbReference type="GO" id="GO:0003735">
    <property type="term" value="F:structural constituent of ribosome"/>
    <property type="evidence" value="ECO:0007669"/>
    <property type="project" value="InterPro"/>
</dbReference>
<dbReference type="GO" id="GO:0006412">
    <property type="term" value="P:translation"/>
    <property type="evidence" value="ECO:0007669"/>
    <property type="project" value="UniProtKB-UniRule"/>
</dbReference>
<dbReference type="CDD" id="cd00473">
    <property type="entry name" value="bS6"/>
    <property type="match status" value="1"/>
</dbReference>
<dbReference type="FunFam" id="3.30.70.60:FF:000003">
    <property type="entry name" value="30S ribosomal protein S6"/>
    <property type="match status" value="1"/>
</dbReference>
<dbReference type="Gene3D" id="3.30.70.60">
    <property type="match status" value="1"/>
</dbReference>
<dbReference type="HAMAP" id="MF_00360">
    <property type="entry name" value="Ribosomal_bS6"/>
    <property type="match status" value="1"/>
</dbReference>
<dbReference type="InterPro" id="IPR000529">
    <property type="entry name" value="Ribosomal_bS6"/>
</dbReference>
<dbReference type="InterPro" id="IPR020815">
    <property type="entry name" value="Ribosomal_bS6_CS"/>
</dbReference>
<dbReference type="InterPro" id="IPR035980">
    <property type="entry name" value="Ribosomal_bS6_sf"/>
</dbReference>
<dbReference type="InterPro" id="IPR020814">
    <property type="entry name" value="Ribosomal_S6_plastid/chlpt"/>
</dbReference>
<dbReference type="InterPro" id="IPR014717">
    <property type="entry name" value="Transl_elong_EF1B/ribsomal_bS6"/>
</dbReference>
<dbReference type="NCBIfam" id="TIGR00166">
    <property type="entry name" value="S6"/>
    <property type="match status" value="1"/>
</dbReference>
<dbReference type="PANTHER" id="PTHR21011">
    <property type="entry name" value="MITOCHONDRIAL 28S RIBOSOMAL PROTEIN S6"/>
    <property type="match status" value="1"/>
</dbReference>
<dbReference type="PANTHER" id="PTHR21011:SF1">
    <property type="entry name" value="SMALL RIBOSOMAL SUBUNIT PROTEIN BS6M"/>
    <property type="match status" value="1"/>
</dbReference>
<dbReference type="Pfam" id="PF01250">
    <property type="entry name" value="Ribosomal_S6"/>
    <property type="match status" value="1"/>
</dbReference>
<dbReference type="SUPFAM" id="SSF54995">
    <property type="entry name" value="Ribosomal protein S6"/>
    <property type="match status" value="1"/>
</dbReference>
<dbReference type="PROSITE" id="PS01048">
    <property type="entry name" value="RIBOSOMAL_S6"/>
    <property type="match status" value="1"/>
</dbReference>
<gene>
    <name evidence="1" type="primary">rpsF</name>
    <name type="ordered locus">Asuc_0761</name>
</gene>
<comment type="function">
    <text evidence="1">Binds together with bS18 to 16S ribosomal RNA.</text>
</comment>
<comment type="similarity">
    <text evidence="1">Belongs to the bacterial ribosomal protein bS6 family.</text>
</comment>
<proteinExistence type="inferred from homology"/>
<evidence type="ECO:0000255" key="1">
    <source>
        <dbReference type="HAMAP-Rule" id="MF_00360"/>
    </source>
</evidence>
<evidence type="ECO:0000305" key="2"/>
<accession>A6VMD6</accession>
<feature type="chain" id="PRO_1000079430" description="Small ribosomal subunit protein bS6">
    <location>
        <begin position="1"/>
        <end position="126"/>
    </location>
</feature>
<sequence>MRHYEIVFMVHPDQSEQVPGMIERYTGSVKEAGGQIHRLEDWGRRQLAYPINKLHKAHYVLMNVEAPQEVIDELETTFRYNDAVLRNVIIRTKHAVTEASPMAKAKDERKVAVAEVETNNFEDAEE</sequence>
<name>RS6_ACTSZ</name>
<organism>
    <name type="scientific">Actinobacillus succinogenes (strain ATCC 55618 / DSM 22257 / CCUG 43843 / 130Z)</name>
    <dbReference type="NCBI Taxonomy" id="339671"/>
    <lineage>
        <taxon>Bacteria</taxon>
        <taxon>Pseudomonadati</taxon>
        <taxon>Pseudomonadota</taxon>
        <taxon>Gammaproteobacteria</taxon>
        <taxon>Pasteurellales</taxon>
        <taxon>Pasteurellaceae</taxon>
        <taxon>Actinobacillus</taxon>
    </lineage>
</organism>
<keyword id="KW-1185">Reference proteome</keyword>
<keyword id="KW-0687">Ribonucleoprotein</keyword>
<keyword id="KW-0689">Ribosomal protein</keyword>
<keyword id="KW-0694">RNA-binding</keyword>
<keyword id="KW-0699">rRNA-binding</keyword>
<protein>
    <recommendedName>
        <fullName evidence="1">Small ribosomal subunit protein bS6</fullName>
    </recommendedName>
    <alternativeName>
        <fullName evidence="2">30S ribosomal protein S6</fullName>
    </alternativeName>
</protein>
<reference key="1">
    <citation type="journal article" date="2010" name="BMC Genomics">
        <title>A genomic perspective on the potential of Actinobacillus succinogenes for industrial succinate production.</title>
        <authorList>
            <person name="McKinlay J.B."/>
            <person name="Laivenieks M."/>
            <person name="Schindler B.D."/>
            <person name="McKinlay A.A."/>
            <person name="Siddaramappa S."/>
            <person name="Challacombe J.F."/>
            <person name="Lowry S.R."/>
            <person name="Clum A."/>
            <person name="Lapidus A.L."/>
            <person name="Burkhart K.B."/>
            <person name="Harkins V."/>
            <person name="Vieille C."/>
        </authorList>
    </citation>
    <scope>NUCLEOTIDE SEQUENCE [LARGE SCALE GENOMIC DNA]</scope>
    <source>
        <strain>ATCC 55618 / DSM 22257 / CCUG 43843 / 130Z</strain>
    </source>
</reference>